<reference key="1">
    <citation type="journal article" date="2006" name="Proc. Natl. Acad. Sci. U.S.A.">
        <title>Comparative genomics of the lactic acid bacteria.</title>
        <authorList>
            <person name="Makarova K.S."/>
            <person name="Slesarev A."/>
            <person name="Wolf Y.I."/>
            <person name="Sorokin A."/>
            <person name="Mirkin B."/>
            <person name="Koonin E.V."/>
            <person name="Pavlov A."/>
            <person name="Pavlova N."/>
            <person name="Karamychev V."/>
            <person name="Polouchine N."/>
            <person name="Shakhova V."/>
            <person name="Grigoriev I."/>
            <person name="Lou Y."/>
            <person name="Rohksar D."/>
            <person name="Lucas S."/>
            <person name="Huang K."/>
            <person name="Goodstein D.M."/>
            <person name="Hawkins T."/>
            <person name="Plengvidhya V."/>
            <person name="Welker D."/>
            <person name="Hughes J."/>
            <person name="Goh Y."/>
            <person name="Benson A."/>
            <person name="Baldwin K."/>
            <person name="Lee J.-H."/>
            <person name="Diaz-Muniz I."/>
            <person name="Dosti B."/>
            <person name="Smeianov V."/>
            <person name="Wechter W."/>
            <person name="Barabote R."/>
            <person name="Lorca G."/>
            <person name="Altermann E."/>
            <person name="Barrangou R."/>
            <person name="Ganesan B."/>
            <person name="Xie Y."/>
            <person name="Rawsthorne H."/>
            <person name="Tamir D."/>
            <person name="Parker C."/>
            <person name="Breidt F."/>
            <person name="Broadbent J.R."/>
            <person name="Hutkins R."/>
            <person name="O'Sullivan D."/>
            <person name="Steele J."/>
            <person name="Unlu G."/>
            <person name="Saier M.H. Jr."/>
            <person name="Klaenhammer T."/>
            <person name="Richardson P."/>
            <person name="Kozyavkin S."/>
            <person name="Weimer B.C."/>
            <person name="Mills D.A."/>
        </authorList>
    </citation>
    <scope>NUCLEOTIDE SEQUENCE [LARGE SCALE GENOMIC DNA]</scope>
    <source>
        <strain>ATCC 334 / BCRC 17002 / CCUG 31169 / CIP 107868 / KCTC 3260 / NRRL B-441</strain>
    </source>
</reference>
<protein>
    <recommendedName>
        <fullName evidence="1">Small ribosomal subunit protein uS8</fullName>
    </recommendedName>
    <alternativeName>
        <fullName evidence="2">30S ribosomal protein S8</fullName>
    </alternativeName>
</protein>
<feature type="chain" id="PRO_0000290855" description="Small ribosomal subunit protein uS8">
    <location>
        <begin position="1"/>
        <end position="132"/>
    </location>
</feature>
<accession>Q034Z7</accession>
<evidence type="ECO:0000255" key="1">
    <source>
        <dbReference type="HAMAP-Rule" id="MF_01302"/>
    </source>
</evidence>
<evidence type="ECO:0000305" key="2"/>
<proteinExistence type="inferred from homology"/>
<keyword id="KW-1185">Reference proteome</keyword>
<keyword id="KW-0687">Ribonucleoprotein</keyword>
<keyword id="KW-0689">Ribosomal protein</keyword>
<keyword id="KW-0694">RNA-binding</keyword>
<keyword id="KW-0699">rRNA-binding</keyword>
<dbReference type="EMBL" id="CP000423">
    <property type="protein sequence ID" value="ABJ71225.1"/>
    <property type="molecule type" value="Genomic_DNA"/>
</dbReference>
<dbReference type="RefSeq" id="WP_003567538.1">
    <property type="nucleotide sequence ID" value="NC_008526.1"/>
</dbReference>
<dbReference type="RefSeq" id="YP_807667.1">
    <property type="nucleotide sequence ID" value="NC_008526.1"/>
</dbReference>
<dbReference type="SMR" id="Q034Z7"/>
<dbReference type="STRING" id="321967.LSEI_2489"/>
<dbReference type="PaxDb" id="321967-LSEI_2489"/>
<dbReference type="GeneID" id="69830163"/>
<dbReference type="KEGG" id="lca:LSEI_2489"/>
<dbReference type="PATRIC" id="fig|321967.11.peg.2443"/>
<dbReference type="HOGENOM" id="CLU_098428_0_2_9"/>
<dbReference type="PRO" id="PR:Q034Z7"/>
<dbReference type="Proteomes" id="UP000001651">
    <property type="component" value="Chromosome"/>
</dbReference>
<dbReference type="GO" id="GO:1990904">
    <property type="term" value="C:ribonucleoprotein complex"/>
    <property type="evidence" value="ECO:0007669"/>
    <property type="project" value="UniProtKB-KW"/>
</dbReference>
<dbReference type="GO" id="GO:0005840">
    <property type="term" value="C:ribosome"/>
    <property type="evidence" value="ECO:0007669"/>
    <property type="project" value="UniProtKB-KW"/>
</dbReference>
<dbReference type="GO" id="GO:0019843">
    <property type="term" value="F:rRNA binding"/>
    <property type="evidence" value="ECO:0007669"/>
    <property type="project" value="UniProtKB-UniRule"/>
</dbReference>
<dbReference type="GO" id="GO:0003735">
    <property type="term" value="F:structural constituent of ribosome"/>
    <property type="evidence" value="ECO:0007669"/>
    <property type="project" value="InterPro"/>
</dbReference>
<dbReference type="GO" id="GO:0006412">
    <property type="term" value="P:translation"/>
    <property type="evidence" value="ECO:0007669"/>
    <property type="project" value="UniProtKB-UniRule"/>
</dbReference>
<dbReference type="FunFam" id="3.30.1370.30:FF:000002">
    <property type="entry name" value="30S ribosomal protein S8"/>
    <property type="match status" value="1"/>
</dbReference>
<dbReference type="FunFam" id="3.30.1490.10:FF:000001">
    <property type="entry name" value="30S ribosomal protein S8"/>
    <property type="match status" value="1"/>
</dbReference>
<dbReference type="Gene3D" id="3.30.1370.30">
    <property type="match status" value="1"/>
</dbReference>
<dbReference type="Gene3D" id="3.30.1490.10">
    <property type="match status" value="1"/>
</dbReference>
<dbReference type="HAMAP" id="MF_01302_B">
    <property type="entry name" value="Ribosomal_uS8_B"/>
    <property type="match status" value="1"/>
</dbReference>
<dbReference type="InterPro" id="IPR000630">
    <property type="entry name" value="Ribosomal_uS8"/>
</dbReference>
<dbReference type="InterPro" id="IPR047863">
    <property type="entry name" value="Ribosomal_uS8_CS"/>
</dbReference>
<dbReference type="InterPro" id="IPR035987">
    <property type="entry name" value="Ribosomal_uS8_sf"/>
</dbReference>
<dbReference type="NCBIfam" id="NF001109">
    <property type="entry name" value="PRK00136.1"/>
    <property type="match status" value="1"/>
</dbReference>
<dbReference type="PANTHER" id="PTHR11758">
    <property type="entry name" value="40S RIBOSOMAL PROTEIN S15A"/>
    <property type="match status" value="1"/>
</dbReference>
<dbReference type="Pfam" id="PF00410">
    <property type="entry name" value="Ribosomal_S8"/>
    <property type="match status" value="1"/>
</dbReference>
<dbReference type="SUPFAM" id="SSF56047">
    <property type="entry name" value="Ribosomal protein S8"/>
    <property type="match status" value="1"/>
</dbReference>
<dbReference type="PROSITE" id="PS00053">
    <property type="entry name" value="RIBOSOMAL_S8"/>
    <property type="match status" value="1"/>
</dbReference>
<organism>
    <name type="scientific">Lacticaseibacillus paracasei (strain ATCC 334 / BCRC 17002 / CCUG 31169 / CIP 107868 / KCTC 3260 / NRRL B-441)</name>
    <name type="common">Lactobacillus paracasei</name>
    <dbReference type="NCBI Taxonomy" id="321967"/>
    <lineage>
        <taxon>Bacteria</taxon>
        <taxon>Bacillati</taxon>
        <taxon>Bacillota</taxon>
        <taxon>Bacilli</taxon>
        <taxon>Lactobacillales</taxon>
        <taxon>Lactobacillaceae</taxon>
        <taxon>Lacticaseibacillus</taxon>
    </lineage>
</organism>
<sequence length="132" mass="14774">MVLTDPIADYLTRIRNANMVRHESLVVPASKMKKDISEILKREGFIRDYEVIDDDKQGVIRIFLKYGKNNERVISGLKRISKPGLRSYVKSDAVPKVLNGLGIAIISTSEGVITDKEARAKNVGGEVLAYVW</sequence>
<gene>
    <name evidence="1" type="primary">rpsH</name>
    <name type="ordered locus">LSEI_2489</name>
</gene>
<comment type="function">
    <text evidence="1">One of the primary rRNA binding proteins, it binds directly to 16S rRNA central domain where it helps coordinate assembly of the platform of the 30S subunit.</text>
</comment>
<comment type="subunit">
    <text evidence="1">Part of the 30S ribosomal subunit. Contacts proteins S5 and S12.</text>
</comment>
<comment type="similarity">
    <text evidence="1">Belongs to the universal ribosomal protein uS8 family.</text>
</comment>
<name>RS8_LACP3</name>